<comment type="function">
    <text evidence="1">Negative regulator of FtsZ ring formation; modulates the frequency and position of FtsZ ring formation. Inhibits FtsZ ring formation at polar sites. Interacts either with FtsZ or with one of its binding partners to promote depolymerization.</text>
</comment>
<comment type="subcellular location">
    <subcellularLocation>
        <location>Cell membrane</location>
        <topology>Single-pass membrane protein</topology>
    </subcellularLocation>
    <text evidence="1">Colocalized with FtsZ to the nascent septal site.</text>
</comment>
<comment type="similarity">
    <text evidence="1">Belongs to the EzrA family.</text>
</comment>
<protein>
    <recommendedName>
        <fullName evidence="1">Septation ring formation regulator EzrA</fullName>
    </recommendedName>
</protein>
<evidence type="ECO:0000255" key="1">
    <source>
        <dbReference type="HAMAP-Rule" id="MF_00728"/>
    </source>
</evidence>
<dbReference type="EMBL" id="AE004092">
    <property type="protein sequence ID" value="AAK33678.1"/>
    <property type="molecule type" value="Genomic_DNA"/>
</dbReference>
<dbReference type="EMBL" id="CP000017">
    <property type="protein sequence ID" value="AAZ51172.1"/>
    <property type="molecule type" value="Genomic_DNA"/>
</dbReference>
<dbReference type="RefSeq" id="NP_268957.1">
    <property type="nucleotide sequence ID" value="NC_002737.2"/>
</dbReference>
<dbReference type="SMR" id="Q9A0K9"/>
<dbReference type="PaxDb" id="1314-HKU360_00565"/>
<dbReference type="KEGG" id="spy:SPy_0728"/>
<dbReference type="KEGG" id="spz:M5005_Spy0554"/>
<dbReference type="PATRIC" id="fig|160490.10.peg.620"/>
<dbReference type="HOGENOM" id="CLU_034079_2_0_9"/>
<dbReference type="OMA" id="FRSQNHI"/>
<dbReference type="Proteomes" id="UP000000750">
    <property type="component" value="Chromosome"/>
</dbReference>
<dbReference type="GO" id="GO:0005886">
    <property type="term" value="C:plasma membrane"/>
    <property type="evidence" value="ECO:0007669"/>
    <property type="project" value="UniProtKB-SubCell"/>
</dbReference>
<dbReference type="GO" id="GO:0005940">
    <property type="term" value="C:septin ring"/>
    <property type="evidence" value="ECO:0007669"/>
    <property type="project" value="InterPro"/>
</dbReference>
<dbReference type="GO" id="GO:0000917">
    <property type="term" value="P:division septum assembly"/>
    <property type="evidence" value="ECO:0007669"/>
    <property type="project" value="UniProtKB-KW"/>
</dbReference>
<dbReference type="GO" id="GO:0000921">
    <property type="term" value="P:septin ring assembly"/>
    <property type="evidence" value="ECO:0007669"/>
    <property type="project" value="InterPro"/>
</dbReference>
<dbReference type="HAMAP" id="MF_00728">
    <property type="entry name" value="EzrA"/>
    <property type="match status" value="1"/>
</dbReference>
<dbReference type="InterPro" id="IPR010379">
    <property type="entry name" value="EzrA"/>
</dbReference>
<dbReference type="NCBIfam" id="NF003407">
    <property type="entry name" value="PRK04778.1-1"/>
    <property type="match status" value="1"/>
</dbReference>
<dbReference type="NCBIfam" id="NF003410">
    <property type="entry name" value="PRK04778.1-4"/>
    <property type="match status" value="1"/>
</dbReference>
<dbReference type="Pfam" id="PF06160">
    <property type="entry name" value="EzrA"/>
    <property type="match status" value="1"/>
</dbReference>
<accession>Q9A0K9</accession>
<accession>Q48ZP6</accession>
<organism>
    <name type="scientific">Streptococcus pyogenes serotype M1</name>
    <dbReference type="NCBI Taxonomy" id="301447"/>
    <lineage>
        <taxon>Bacteria</taxon>
        <taxon>Bacillati</taxon>
        <taxon>Bacillota</taxon>
        <taxon>Bacilli</taxon>
        <taxon>Lactobacillales</taxon>
        <taxon>Streptococcaceae</taxon>
        <taxon>Streptococcus</taxon>
    </lineage>
</organism>
<name>EZRA_STRP1</name>
<keyword id="KW-0131">Cell cycle</keyword>
<keyword id="KW-0132">Cell division</keyword>
<keyword id="KW-1003">Cell membrane</keyword>
<keyword id="KW-0175">Coiled coil</keyword>
<keyword id="KW-0472">Membrane</keyword>
<keyword id="KW-1185">Reference proteome</keyword>
<keyword id="KW-0717">Septation</keyword>
<keyword id="KW-0812">Transmembrane</keyword>
<keyword id="KW-1133">Transmembrane helix</keyword>
<sequence>MSSGIILLIVAIVLLVIIAYLVGVIIRKRNDSLITSLEERKQALFALPVNDEIEEVKSLHLIGQSQTSFREWNQKWVDLTVNSFADIENHIFEAENLNDTFNFIRAKHEINSVESQLNLVEEDIASIREALNILKEQEEKNSARVTHALDLYEKLQASISENEDNFGSTMPEIDKQMKNIETEFSQFVALNSSGDPVEASEVLDRAEEHTIALGQITEQIPAIVAKLEDDFPDQLDDLETGYRRLLEENYHFPEKNIEARFQEIRESIRANSSELVTLDLDRAREENTHIQERIDSLYEVFEREIAAYKVAAKNSKMLPRYLEHVKRNNEQLKDEIARLSRKYILSETESLTVKAFEKDIKEIEDSTLAVAEQFGLQEKPFSELQVTFERSIKTLTNVESGQMDVFAAVKDIEKIESQARHNLDVYVTQLHMIKRYMEKRHLPGIPQDFLSAFFTTSSQLEALMDELSRGRINIEAVSRLSEVATVAIANLEDLTYQVVQNATLTEQLLQYSNRYRSFEAGVQSSFEHALRLFEVENDYQASFDEISYALETVEPGVTDRFVNSYEKTREHIRF</sequence>
<gene>
    <name evidence="1" type="primary">ezrA</name>
    <name type="ordered locus">SPy_0728</name>
    <name type="ordered locus">M5005_Spy0554</name>
</gene>
<feature type="chain" id="PRO_0000172891" description="Septation ring formation regulator EzrA">
    <location>
        <begin position="1"/>
        <end position="574"/>
    </location>
</feature>
<feature type="topological domain" description="Extracellular" evidence="1">
    <location>
        <begin position="1"/>
        <end position="7"/>
    </location>
</feature>
<feature type="transmembrane region" description="Helical" evidence="1">
    <location>
        <begin position="8"/>
        <end position="26"/>
    </location>
</feature>
<feature type="topological domain" description="Cytoplasmic" evidence="1">
    <location>
        <begin position="27"/>
        <end position="574"/>
    </location>
</feature>
<feature type="coiled-coil region" evidence="1">
    <location>
        <begin position="102"/>
        <end position="141"/>
    </location>
</feature>
<feature type="coiled-coil region" evidence="1">
    <location>
        <begin position="274"/>
        <end position="350"/>
    </location>
</feature>
<feature type="coiled-coil region" evidence="1">
    <location>
        <begin position="459"/>
        <end position="520"/>
    </location>
</feature>
<proteinExistence type="inferred from homology"/>
<reference key="1">
    <citation type="journal article" date="2001" name="Proc. Natl. Acad. Sci. U.S.A.">
        <title>Complete genome sequence of an M1 strain of Streptococcus pyogenes.</title>
        <authorList>
            <person name="Ferretti J.J."/>
            <person name="McShan W.M."/>
            <person name="Ajdic D.J."/>
            <person name="Savic D.J."/>
            <person name="Savic G."/>
            <person name="Lyon K."/>
            <person name="Primeaux C."/>
            <person name="Sezate S."/>
            <person name="Suvorov A.N."/>
            <person name="Kenton S."/>
            <person name="Lai H.S."/>
            <person name="Lin S.P."/>
            <person name="Qian Y."/>
            <person name="Jia H.G."/>
            <person name="Najar F.Z."/>
            <person name="Ren Q."/>
            <person name="Zhu H."/>
            <person name="Song L."/>
            <person name="White J."/>
            <person name="Yuan X."/>
            <person name="Clifton S.W."/>
            <person name="Roe B.A."/>
            <person name="McLaughlin R.E."/>
        </authorList>
    </citation>
    <scope>NUCLEOTIDE SEQUENCE [LARGE SCALE GENOMIC DNA]</scope>
    <source>
        <strain>ATCC 700294 / SF370 / Serotype M1</strain>
    </source>
</reference>
<reference key="2">
    <citation type="journal article" date="2005" name="J. Infect. Dis.">
        <title>Evolutionary origin and emergence of a highly successful clone of serotype M1 group A Streptococcus involved multiple horizontal gene transfer events.</title>
        <authorList>
            <person name="Sumby P."/>
            <person name="Porcella S.F."/>
            <person name="Madrigal A.G."/>
            <person name="Barbian K.D."/>
            <person name="Virtaneva K."/>
            <person name="Ricklefs S.M."/>
            <person name="Sturdevant D.E."/>
            <person name="Graham M.R."/>
            <person name="Vuopio-Varkila J."/>
            <person name="Hoe N.P."/>
            <person name="Musser J.M."/>
        </authorList>
    </citation>
    <scope>NUCLEOTIDE SEQUENCE [LARGE SCALE GENOMIC DNA]</scope>
    <source>
        <strain>ATCC BAA-947 / MGAS5005 / Serotype M1</strain>
    </source>
</reference>